<dbReference type="EMBL" id="CP000487">
    <property type="protein sequence ID" value="ABK82590.1"/>
    <property type="molecule type" value="Genomic_DNA"/>
</dbReference>
<dbReference type="RefSeq" id="WP_010400169.1">
    <property type="nucleotide sequence ID" value="NC_008599.1"/>
</dbReference>
<dbReference type="KEGG" id="cff:CFF8240_1572"/>
<dbReference type="eggNOG" id="ENOG5030YCA">
    <property type="taxonomic scope" value="Bacteria"/>
</dbReference>
<dbReference type="HOGENOM" id="CLU_120359_1_0_7"/>
<dbReference type="Proteomes" id="UP000000760">
    <property type="component" value="Chromosome"/>
</dbReference>
<dbReference type="HAMAP" id="MF_02110">
    <property type="entry name" value="UPF0763"/>
    <property type="match status" value="1"/>
</dbReference>
<dbReference type="InterPro" id="IPR019724">
    <property type="entry name" value="UPF0763"/>
</dbReference>
<dbReference type="Pfam" id="PF10788">
    <property type="entry name" value="DUF2603"/>
    <property type="match status" value="1"/>
</dbReference>
<proteinExistence type="inferred from homology"/>
<feature type="chain" id="PRO_0000394776" description="UPF0763 protein CFF8240_1572">
    <location>
        <begin position="1"/>
        <end position="145"/>
    </location>
</feature>
<sequence>MNNERLDNISNSLGISKRKRTLFELEQISDNEMKLIIKNGKLNLSVPWFGMSGNTPCTLVPAGLFEAIINTLKNAQKENFELKLEKSIWQHIPVDFGDVWSVAIDEIKKSKFKKEPNLDRVVKKIKKEHPNLFVDMQSLIQSKEN</sequence>
<reference key="1">
    <citation type="submission" date="2006-11" db="EMBL/GenBank/DDBJ databases">
        <title>Sequence of Campylobacter fetus subsp. fetus 82-40.</title>
        <authorList>
            <person name="Fouts D.E."/>
            <person name="Nelson K.E."/>
        </authorList>
    </citation>
    <scope>NUCLEOTIDE SEQUENCE [LARGE SCALE GENOMIC DNA]</scope>
    <source>
        <strain>82-40</strain>
    </source>
</reference>
<evidence type="ECO:0000255" key="1">
    <source>
        <dbReference type="HAMAP-Rule" id="MF_02110"/>
    </source>
</evidence>
<accession>A0RR72</accession>
<protein>
    <recommendedName>
        <fullName evidence="1">UPF0763 protein CFF8240_1572</fullName>
    </recommendedName>
</protein>
<organism>
    <name type="scientific">Campylobacter fetus subsp. fetus (strain 82-40)</name>
    <dbReference type="NCBI Taxonomy" id="360106"/>
    <lineage>
        <taxon>Bacteria</taxon>
        <taxon>Pseudomonadati</taxon>
        <taxon>Campylobacterota</taxon>
        <taxon>Epsilonproteobacteria</taxon>
        <taxon>Campylobacterales</taxon>
        <taxon>Campylobacteraceae</taxon>
        <taxon>Campylobacter</taxon>
    </lineage>
</organism>
<gene>
    <name type="ordered locus">CFF8240_1572</name>
</gene>
<comment type="similarity">
    <text evidence="1">Belongs to the UPF0763 family.</text>
</comment>
<name>Y1572_CAMFF</name>